<comment type="subcellular location">
    <subcellularLocation>
        <location evidence="2">Cell membrane</location>
        <topology evidence="2">Multi-pass membrane protein</topology>
    </subcellularLocation>
</comment>
<name>Y437_METJA</name>
<accession>Q57879</accession>
<dbReference type="EMBL" id="L77117">
    <property type="protein sequence ID" value="AAB98425.1"/>
    <property type="molecule type" value="Genomic_DNA"/>
</dbReference>
<dbReference type="PIR" id="E64354">
    <property type="entry name" value="E64354"/>
</dbReference>
<dbReference type="RefSeq" id="WP_010869936.1">
    <property type="nucleotide sequence ID" value="NC_000909.1"/>
</dbReference>
<dbReference type="SMR" id="Q57879"/>
<dbReference type="STRING" id="243232.MJ_0437"/>
<dbReference type="PaxDb" id="243232-MJ_0437"/>
<dbReference type="EnsemblBacteria" id="AAB98425">
    <property type="protein sequence ID" value="AAB98425"/>
    <property type="gene ID" value="MJ_0437"/>
</dbReference>
<dbReference type="GeneID" id="1451297"/>
<dbReference type="KEGG" id="mja:MJ_0437"/>
<dbReference type="eggNOG" id="arCOG03076">
    <property type="taxonomic scope" value="Archaea"/>
</dbReference>
<dbReference type="HOGENOM" id="CLU_173139_2_1_2"/>
<dbReference type="InParanoid" id="Q57879"/>
<dbReference type="OrthoDB" id="65655at2157"/>
<dbReference type="PhylomeDB" id="Q57879"/>
<dbReference type="Proteomes" id="UP000000805">
    <property type="component" value="Chromosome"/>
</dbReference>
<dbReference type="GO" id="GO:0005886">
    <property type="term" value="C:plasma membrane"/>
    <property type="evidence" value="ECO:0007669"/>
    <property type="project" value="UniProtKB-SubCell"/>
</dbReference>
<dbReference type="InterPro" id="IPR025383">
    <property type="entry name" value="MrpA_C/MbhD"/>
</dbReference>
<dbReference type="NCBIfam" id="NF004923">
    <property type="entry name" value="PRK06280.1"/>
    <property type="match status" value="1"/>
</dbReference>
<dbReference type="Pfam" id="PF13244">
    <property type="entry name" value="MbhD"/>
    <property type="match status" value="1"/>
</dbReference>
<reference key="1">
    <citation type="journal article" date="1996" name="Science">
        <title>Complete genome sequence of the methanogenic archaeon, Methanococcus jannaschii.</title>
        <authorList>
            <person name="Bult C.J."/>
            <person name="White O."/>
            <person name="Olsen G.J."/>
            <person name="Zhou L."/>
            <person name="Fleischmann R.D."/>
            <person name="Sutton G.G."/>
            <person name="Blake J.A."/>
            <person name="FitzGerald L.M."/>
            <person name="Clayton R.A."/>
            <person name="Gocayne J.D."/>
            <person name="Kerlavage A.R."/>
            <person name="Dougherty B.A."/>
            <person name="Tomb J.-F."/>
            <person name="Adams M.D."/>
            <person name="Reich C.I."/>
            <person name="Overbeek R."/>
            <person name="Kirkness E.F."/>
            <person name="Weinstock K.G."/>
            <person name="Merrick J.M."/>
            <person name="Glodek A."/>
            <person name="Scott J.L."/>
            <person name="Geoghagen N.S.M."/>
            <person name="Weidman J.F."/>
            <person name="Fuhrmann J.L."/>
            <person name="Nguyen D."/>
            <person name="Utterback T.R."/>
            <person name="Kelley J.M."/>
            <person name="Peterson J.D."/>
            <person name="Sadow P.W."/>
            <person name="Hanna M.C."/>
            <person name="Cotton M.D."/>
            <person name="Roberts K.M."/>
            <person name="Hurst M.A."/>
            <person name="Kaine B.P."/>
            <person name="Borodovsky M."/>
            <person name="Klenk H.-P."/>
            <person name="Fraser C.M."/>
            <person name="Smith H.O."/>
            <person name="Woese C.R."/>
            <person name="Venter J.C."/>
        </authorList>
    </citation>
    <scope>NUCLEOTIDE SEQUENCE [LARGE SCALE GENOMIC DNA]</scope>
    <source>
        <strain>ATCC 43067 / DSM 2661 / JAL-1 / JCM 10045 / NBRC 100440</strain>
    </source>
</reference>
<proteinExistence type="predicted"/>
<sequence>MEIIHYIVIIMTLLSSLASLLQRDLIKCIILSGFAGLCMAYLYYALLAPDVALTEAILGGAILPALFAFTVRRTQRIDE</sequence>
<keyword id="KW-1003">Cell membrane</keyword>
<keyword id="KW-0472">Membrane</keyword>
<keyword id="KW-1185">Reference proteome</keyword>
<keyword id="KW-0812">Transmembrane</keyword>
<keyword id="KW-1133">Transmembrane helix</keyword>
<protein>
    <recommendedName>
        <fullName>Uncharacterized protein MJ0437</fullName>
    </recommendedName>
</protein>
<feature type="chain" id="PRO_0000106876" description="Uncharacterized protein MJ0437">
    <location>
        <begin position="1"/>
        <end position="79"/>
    </location>
</feature>
<feature type="transmembrane region" description="Helical" evidence="1">
    <location>
        <begin position="28"/>
        <end position="48"/>
    </location>
</feature>
<feature type="transmembrane region" description="Helical" evidence="1">
    <location>
        <begin position="51"/>
        <end position="71"/>
    </location>
</feature>
<gene>
    <name type="ordered locus">MJ0437</name>
</gene>
<evidence type="ECO:0000255" key="1"/>
<evidence type="ECO:0000305" key="2"/>
<organism>
    <name type="scientific">Methanocaldococcus jannaschii (strain ATCC 43067 / DSM 2661 / JAL-1 / JCM 10045 / NBRC 100440)</name>
    <name type="common">Methanococcus jannaschii</name>
    <dbReference type="NCBI Taxonomy" id="243232"/>
    <lineage>
        <taxon>Archaea</taxon>
        <taxon>Methanobacteriati</taxon>
        <taxon>Methanobacteriota</taxon>
        <taxon>Methanomada group</taxon>
        <taxon>Methanococci</taxon>
        <taxon>Methanococcales</taxon>
        <taxon>Methanocaldococcaceae</taxon>
        <taxon>Methanocaldococcus</taxon>
    </lineage>
</organism>